<keyword id="KW-0044">Antibiotic</keyword>
<keyword id="KW-0929">Antimicrobial</keyword>
<keyword id="KW-0204">Cytolysis</keyword>
<keyword id="KW-0903">Direct protein sequencing</keyword>
<keyword id="KW-1015">Disulfide bond</keyword>
<keyword id="KW-0295">Fungicide</keyword>
<keyword id="KW-0611">Plant defense</keyword>
<keyword id="KW-0964">Secreted</keyword>
<keyword id="KW-0800">Toxin</keyword>
<dbReference type="SMR" id="C0HJH9"/>
<dbReference type="GO" id="GO:0005576">
    <property type="term" value="C:extracellular region"/>
    <property type="evidence" value="ECO:0007669"/>
    <property type="project" value="UniProtKB-SubCell"/>
</dbReference>
<dbReference type="GO" id="GO:0090729">
    <property type="term" value="F:toxin activity"/>
    <property type="evidence" value="ECO:0007669"/>
    <property type="project" value="UniProtKB-KW"/>
</dbReference>
<dbReference type="GO" id="GO:0050832">
    <property type="term" value="P:defense response to fungus"/>
    <property type="evidence" value="ECO:0000314"/>
    <property type="project" value="UniProtKB"/>
</dbReference>
<dbReference type="GO" id="GO:0050830">
    <property type="term" value="P:defense response to Gram-positive bacterium"/>
    <property type="evidence" value="ECO:0000314"/>
    <property type="project" value="UniProtKB"/>
</dbReference>
<dbReference type="GO" id="GO:0001897">
    <property type="term" value="P:symbiont-mediated cytolysis of host cell"/>
    <property type="evidence" value="ECO:0000314"/>
    <property type="project" value="UniProtKB"/>
</dbReference>
<dbReference type="FunFam" id="3.30.1350.10:FF:000001">
    <property type="entry name" value="Hellethionin-D"/>
    <property type="match status" value="1"/>
</dbReference>
<dbReference type="Gene3D" id="3.30.1350.10">
    <property type="entry name" value="Thionin-like"/>
    <property type="match status" value="1"/>
</dbReference>
<dbReference type="InterPro" id="IPR001010">
    <property type="entry name" value="Thionin"/>
</dbReference>
<dbReference type="InterPro" id="IPR036391">
    <property type="entry name" value="Thionin-like_sf"/>
</dbReference>
<dbReference type="Pfam" id="PF00321">
    <property type="entry name" value="Thionin"/>
    <property type="match status" value="1"/>
</dbReference>
<dbReference type="PRINTS" id="PR00287">
    <property type="entry name" value="THIONIN"/>
</dbReference>
<dbReference type="SUPFAM" id="SSF57429">
    <property type="entry name" value="Crambin-like"/>
    <property type="match status" value="1"/>
</dbReference>
<dbReference type="PROSITE" id="PS00271">
    <property type="entry name" value="THIONIN"/>
    <property type="match status" value="1"/>
</dbReference>
<proteinExistence type="evidence at protein level"/>
<feature type="peptide" id="PRO_0000440579" description="Thionin NsW1" evidence="2">
    <location>
        <begin position="1"/>
        <end position="35" status="greater than"/>
    </location>
</feature>
<feature type="disulfide bond" evidence="1">
    <location>
        <begin position="3"/>
        <end status="unknown"/>
    </location>
</feature>
<feature type="disulfide bond" evidence="1">
    <location>
        <begin position="4"/>
        <end position="32"/>
    </location>
</feature>
<feature type="disulfide bond" evidence="1">
    <location>
        <begin position="12"/>
        <end position="30"/>
    </location>
</feature>
<feature type="disulfide bond" evidence="1">
    <location>
        <begin position="16"/>
        <end position="26"/>
    </location>
</feature>
<feature type="non-terminal residue" evidence="3">
    <location>
        <position position="35"/>
    </location>
</feature>
<accession>C0HJH9</accession>
<evidence type="ECO:0000250" key="1">
    <source>
        <dbReference type="UniProtKB" id="P21742"/>
    </source>
</evidence>
<evidence type="ECO:0000269" key="2">
    <source ref="1"/>
</evidence>
<evidence type="ECO:0000303" key="3">
    <source ref="1"/>
</evidence>
<evidence type="ECO:0000305" key="4"/>
<comment type="function">
    <text evidence="2">Antimicrobial peptide disrupting membranes. Has antibacterial against Gram-positive bacteria S.aureus (MIC=6.5 uM) and B.subtilis (MIC=3.25 uM) but not against Gram-negative bacterium E.coli. Has antifungal activity against C.albicans (MIC=1.63 uM).</text>
</comment>
<comment type="subcellular location">
    <subcellularLocation>
        <location evidence="4">Secreted</location>
    </subcellularLocation>
</comment>
<comment type="PTM">
    <text evidence="2">Contains 4 disulfide bonds.</text>
</comment>
<comment type="mass spectrometry"/>
<comment type="similarity">
    <text evidence="4">Belongs to the plant thionin (TC 1.C.44) family. 4 C-C subfamily.</text>
</comment>
<organism evidence="3">
    <name type="scientific">Nigella sativa</name>
    <name type="common">Black cumin</name>
    <dbReference type="NCBI Taxonomy" id="555479"/>
    <lineage>
        <taxon>Eukaryota</taxon>
        <taxon>Viridiplantae</taxon>
        <taxon>Streptophyta</taxon>
        <taxon>Embryophyta</taxon>
        <taxon>Tracheophyta</taxon>
        <taxon>Spermatophyta</taxon>
        <taxon>Magnoliopsida</taxon>
        <taxon>Ranunculales</taxon>
        <taxon>Ranunculaceae</taxon>
        <taxon>Ranunculoideae</taxon>
        <taxon>Nigelleae</taxon>
        <taxon>Nigella</taxon>
    </lineage>
</organism>
<reference evidence="4" key="1">
    <citation type="journal article" date="2016" name="Int. J. Pept. Res. Ther.">
        <title>Novel Thionins from Black Seed (Nigella sativa L.) Demonstrate Antimicrobial Activity.</title>
        <authorList>
            <person name="Vasilchenko A.S."/>
            <person name="Smirnov A.N."/>
            <person name="Zavriev S.K."/>
            <person name="Grishin E.V."/>
            <person name="Vasilchenko A.V."/>
            <person name="Rogozhin E.A."/>
        </authorList>
    </citation>
    <scope>PROTEIN SEQUENCE</scope>
    <scope>FUNCTION</scope>
    <scope>PRESENCE OF DISULFIDE BONDS</scope>
    <scope>MASS SPECTROMETRY</scope>
    <source>
        <tissue evidence="3">Seed</tissue>
    </source>
</reference>
<name>THNW1_NIGSA</name>
<sequence>KSCCKNTLGRNCYNTCRFMKKPRKTCSGLCGCKIS</sequence>
<protein>
    <recommendedName>
        <fullName evidence="3">Thionin NsW1</fullName>
    </recommendedName>
</protein>